<keyword id="KW-0028">Amino-acid biosynthesis</keyword>
<keyword id="KW-0963">Cytoplasm</keyword>
<keyword id="KW-0368">Histidine biosynthesis</keyword>
<keyword id="KW-0456">Lyase</keyword>
<accession>A1VGY9</accession>
<gene>
    <name evidence="1" type="primary">hisF</name>
    <name type="ordered locus">Dvul_2694</name>
</gene>
<name>HIS6_NITV4</name>
<protein>
    <recommendedName>
        <fullName evidence="1">Imidazole glycerol phosphate synthase subunit HisF</fullName>
        <ecNumber evidence="1">4.3.2.10</ecNumber>
    </recommendedName>
    <alternativeName>
        <fullName evidence="1">IGP synthase cyclase subunit</fullName>
    </alternativeName>
    <alternativeName>
        <fullName evidence="1">IGP synthase subunit HisF</fullName>
    </alternativeName>
    <alternativeName>
        <fullName evidence="1">ImGP synthase subunit HisF</fullName>
        <shortName evidence="1">IGPS subunit HisF</shortName>
    </alternativeName>
</protein>
<feature type="chain" id="PRO_1000063054" description="Imidazole glycerol phosphate synthase subunit HisF">
    <location>
        <begin position="1"/>
        <end position="259"/>
    </location>
</feature>
<feature type="active site" evidence="1">
    <location>
        <position position="11"/>
    </location>
</feature>
<feature type="active site" evidence="1">
    <location>
        <position position="130"/>
    </location>
</feature>
<evidence type="ECO:0000255" key="1">
    <source>
        <dbReference type="HAMAP-Rule" id="MF_01013"/>
    </source>
</evidence>
<reference key="1">
    <citation type="journal article" date="2009" name="Environ. Microbiol.">
        <title>Contribution of mobile genetic elements to Desulfovibrio vulgaris genome plasticity.</title>
        <authorList>
            <person name="Walker C.B."/>
            <person name="Stolyar S."/>
            <person name="Chivian D."/>
            <person name="Pinel N."/>
            <person name="Gabster J.A."/>
            <person name="Dehal P.S."/>
            <person name="He Z."/>
            <person name="Yang Z.K."/>
            <person name="Yen H.C."/>
            <person name="Zhou J."/>
            <person name="Wall J.D."/>
            <person name="Hazen T.C."/>
            <person name="Arkin A.P."/>
            <person name="Stahl D.A."/>
        </authorList>
    </citation>
    <scope>NUCLEOTIDE SEQUENCE [LARGE SCALE GENOMIC DNA]</scope>
    <source>
        <strain>DP4</strain>
    </source>
</reference>
<organism>
    <name type="scientific">Nitratidesulfovibrio vulgaris (strain DP4)</name>
    <name type="common">Desulfovibrio vulgaris</name>
    <dbReference type="NCBI Taxonomy" id="391774"/>
    <lineage>
        <taxon>Bacteria</taxon>
        <taxon>Pseudomonadati</taxon>
        <taxon>Thermodesulfobacteriota</taxon>
        <taxon>Desulfovibrionia</taxon>
        <taxon>Desulfovibrionales</taxon>
        <taxon>Desulfovibrionaceae</taxon>
        <taxon>Nitratidesulfovibrio</taxon>
    </lineage>
</organism>
<comment type="function">
    <text evidence="1">IGPS catalyzes the conversion of PRFAR and glutamine to IGP, AICAR and glutamate. The HisF subunit catalyzes the cyclization activity that produces IGP and AICAR from PRFAR using the ammonia provided by the HisH subunit.</text>
</comment>
<comment type="catalytic activity">
    <reaction evidence="1">
        <text>5-[(5-phospho-1-deoxy-D-ribulos-1-ylimino)methylamino]-1-(5-phospho-beta-D-ribosyl)imidazole-4-carboxamide + L-glutamine = D-erythro-1-(imidazol-4-yl)glycerol 3-phosphate + 5-amino-1-(5-phospho-beta-D-ribosyl)imidazole-4-carboxamide + L-glutamate + H(+)</text>
        <dbReference type="Rhea" id="RHEA:24793"/>
        <dbReference type="ChEBI" id="CHEBI:15378"/>
        <dbReference type="ChEBI" id="CHEBI:29985"/>
        <dbReference type="ChEBI" id="CHEBI:58278"/>
        <dbReference type="ChEBI" id="CHEBI:58359"/>
        <dbReference type="ChEBI" id="CHEBI:58475"/>
        <dbReference type="ChEBI" id="CHEBI:58525"/>
        <dbReference type="EC" id="4.3.2.10"/>
    </reaction>
</comment>
<comment type="pathway">
    <text evidence="1">Amino-acid biosynthesis; L-histidine biosynthesis; L-histidine from 5-phospho-alpha-D-ribose 1-diphosphate: step 5/9.</text>
</comment>
<comment type="subunit">
    <text evidence="1">Heterodimer of HisH and HisF.</text>
</comment>
<comment type="subcellular location">
    <subcellularLocation>
        <location evidence="1">Cytoplasm</location>
    </subcellularLocation>
</comment>
<comment type="similarity">
    <text evidence="1">Belongs to the HisA/HisF family.</text>
</comment>
<sequence>MLSKRIIPCLDVRAGRLTKGVKFEGNVDIGDPVATARRYYEEGADEIVFYDITASHEDRGIFLDVVERVASEIFIPFSVGGGINTVDDMRAVLMAGAEKVSVNSGAVKTPDIISQGAAAFGSQAIVVGMDVKQVEKSATIPSGYEIVIHGGRKYMGMDAIEWAKTCESLGAGELCVNSIDADGTKDGYELTLTRMISDAVTIPVIASGGAGSPEHMYDALTRGGASAALIASIVHYGTYTIPDLKRRISGMGAKMRMVW</sequence>
<dbReference type="EC" id="4.3.2.10" evidence="1"/>
<dbReference type="EMBL" id="CP000527">
    <property type="protein sequence ID" value="ABM29705.1"/>
    <property type="molecule type" value="Genomic_DNA"/>
</dbReference>
<dbReference type="RefSeq" id="WP_010937595.1">
    <property type="nucleotide sequence ID" value="NC_008751.1"/>
</dbReference>
<dbReference type="SMR" id="A1VGY9"/>
<dbReference type="KEGG" id="dvl:Dvul_2694"/>
<dbReference type="HOGENOM" id="CLU_048577_4_0_7"/>
<dbReference type="UniPathway" id="UPA00031">
    <property type="reaction ID" value="UER00010"/>
</dbReference>
<dbReference type="Proteomes" id="UP000009173">
    <property type="component" value="Chromosome"/>
</dbReference>
<dbReference type="GO" id="GO:0005737">
    <property type="term" value="C:cytoplasm"/>
    <property type="evidence" value="ECO:0007669"/>
    <property type="project" value="UniProtKB-SubCell"/>
</dbReference>
<dbReference type="GO" id="GO:0000107">
    <property type="term" value="F:imidazoleglycerol-phosphate synthase activity"/>
    <property type="evidence" value="ECO:0007669"/>
    <property type="project" value="UniProtKB-UniRule"/>
</dbReference>
<dbReference type="GO" id="GO:0016829">
    <property type="term" value="F:lyase activity"/>
    <property type="evidence" value="ECO:0007669"/>
    <property type="project" value="UniProtKB-KW"/>
</dbReference>
<dbReference type="GO" id="GO:0000105">
    <property type="term" value="P:L-histidine biosynthetic process"/>
    <property type="evidence" value="ECO:0007669"/>
    <property type="project" value="UniProtKB-UniRule"/>
</dbReference>
<dbReference type="CDD" id="cd04731">
    <property type="entry name" value="HisF"/>
    <property type="match status" value="1"/>
</dbReference>
<dbReference type="Gene3D" id="3.20.20.70">
    <property type="entry name" value="Aldolase class I"/>
    <property type="match status" value="1"/>
</dbReference>
<dbReference type="HAMAP" id="MF_01013">
    <property type="entry name" value="HisF"/>
    <property type="match status" value="1"/>
</dbReference>
<dbReference type="InterPro" id="IPR013785">
    <property type="entry name" value="Aldolase_TIM"/>
</dbReference>
<dbReference type="InterPro" id="IPR006062">
    <property type="entry name" value="His_biosynth"/>
</dbReference>
<dbReference type="InterPro" id="IPR004651">
    <property type="entry name" value="HisF"/>
</dbReference>
<dbReference type="InterPro" id="IPR050064">
    <property type="entry name" value="IGPS_HisA/HisF"/>
</dbReference>
<dbReference type="InterPro" id="IPR011060">
    <property type="entry name" value="RibuloseP-bd_barrel"/>
</dbReference>
<dbReference type="NCBIfam" id="TIGR00735">
    <property type="entry name" value="hisF"/>
    <property type="match status" value="1"/>
</dbReference>
<dbReference type="PANTHER" id="PTHR21235:SF2">
    <property type="entry name" value="IMIDAZOLE GLYCEROL PHOSPHATE SYNTHASE HISHF"/>
    <property type="match status" value="1"/>
</dbReference>
<dbReference type="PANTHER" id="PTHR21235">
    <property type="entry name" value="IMIDAZOLE GLYCEROL PHOSPHATE SYNTHASE SUBUNIT HISF/H IGP SYNTHASE SUBUNIT HISF/H"/>
    <property type="match status" value="1"/>
</dbReference>
<dbReference type="Pfam" id="PF00977">
    <property type="entry name" value="His_biosynth"/>
    <property type="match status" value="1"/>
</dbReference>
<dbReference type="SUPFAM" id="SSF51366">
    <property type="entry name" value="Ribulose-phoshate binding barrel"/>
    <property type="match status" value="1"/>
</dbReference>
<proteinExistence type="inferred from homology"/>